<reference key="1">
    <citation type="journal article" date="1993" name="Mol. Microbiol.">
        <title>Repeat unit polysaccharides of bacteria: a model for polymerization resembling that of ribosomes and fatty acid synthetase, with a novel mechanism for determining chain length.</title>
        <authorList>
            <person name="Bastin D.A."/>
            <person name="Stevenson G."/>
            <person name="Brown P.K."/>
            <person name="Haase A."/>
            <person name="Reeves P.R."/>
        </authorList>
    </citation>
    <scope>NUCLEOTIDE SEQUENCE [GENOMIC DNA]</scope>
    <source>
        <strain>O111:H- / M92 / EPEC</strain>
    </source>
</reference>
<comment type="catalytic activity">
    <reaction>
        <text>UDP-alpha-D-glucose + 2 NAD(+) + H2O = UDP-alpha-D-glucuronate + 2 NADH + 3 H(+)</text>
        <dbReference type="Rhea" id="RHEA:23596"/>
        <dbReference type="ChEBI" id="CHEBI:15377"/>
        <dbReference type="ChEBI" id="CHEBI:15378"/>
        <dbReference type="ChEBI" id="CHEBI:57540"/>
        <dbReference type="ChEBI" id="CHEBI:57945"/>
        <dbReference type="ChEBI" id="CHEBI:58052"/>
        <dbReference type="ChEBI" id="CHEBI:58885"/>
        <dbReference type="EC" id="1.1.1.22"/>
    </reaction>
</comment>
<comment type="pathway">
    <text>Nucleotide-sugar biosynthesis; UDP-alpha-D-glucuronate biosynthesis; UDP-alpha-D-glucuronate from UDP-alpha-D-glucose: step 1/1.</text>
</comment>
<comment type="pathway">
    <text>Bacterial outer membrane biogenesis; lipopolysaccharide biosynthesis.</text>
</comment>
<comment type="PTM">
    <text evidence="1">Phosphorylated on a tyrosine residue. It results in a significant increase of the dehydrogenase activity (By similarity).</text>
</comment>
<comment type="similarity">
    <text evidence="4">Belongs to the UDP-glucose/GDP-mannose dehydrogenase family.</text>
</comment>
<evidence type="ECO:0000250" key="1"/>
<evidence type="ECO:0000250" key="2">
    <source>
        <dbReference type="UniProtKB" id="Q0P8H3"/>
    </source>
</evidence>
<evidence type="ECO:0000255" key="3"/>
<evidence type="ECO:0000305" key="4"/>
<dbReference type="EC" id="1.1.1.22"/>
<dbReference type="EMBL" id="Z17241">
    <property type="protein sequence ID" value="CAA78939.1"/>
    <property type="molecule type" value="Genomic_DNA"/>
</dbReference>
<dbReference type="PIR" id="S33668">
    <property type="entry name" value="S33668"/>
</dbReference>
<dbReference type="SMR" id="Q04872"/>
<dbReference type="UniPathway" id="UPA00030"/>
<dbReference type="UniPathway" id="UPA00038">
    <property type="reaction ID" value="UER00491"/>
</dbReference>
<dbReference type="GO" id="GO:0051287">
    <property type="term" value="F:NAD binding"/>
    <property type="evidence" value="ECO:0000250"/>
    <property type="project" value="UniProtKB"/>
</dbReference>
<dbReference type="GO" id="GO:0003979">
    <property type="term" value="F:UDP-glucose 6-dehydrogenase activity"/>
    <property type="evidence" value="ECO:0000250"/>
    <property type="project" value="UniProtKB"/>
</dbReference>
<dbReference type="GO" id="GO:0009103">
    <property type="term" value="P:lipopolysaccharide biosynthetic process"/>
    <property type="evidence" value="ECO:0007669"/>
    <property type="project" value="UniProtKB-UniPathway"/>
</dbReference>
<dbReference type="GO" id="GO:0006065">
    <property type="term" value="P:UDP-glucuronate biosynthetic process"/>
    <property type="evidence" value="ECO:0007669"/>
    <property type="project" value="UniProtKB-UniPathway"/>
</dbReference>
<dbReference type="FunFam" id="1.10.1040.10:FF:000026">
    <property type="entry name" value="UDP-glucose 6-dehydrogenase"/>
    <property type="match status" value="1"/>
</dbReference>
<dbReference type="FunFam" id="3.40.50.720:FF:000297">
    <property type="entry name" value="UDP-glucose 6-dehydrogenase"/>
    <property type="match status" value="1"/>
</dbReference>
<dbReference type="FunFam" id="3.40.50.720:FF:000400">
    <property type="entry name" value="UDP-glucose 6-dehydrogenase"/>
    <property type="match status" value="1"/>
</dbReference>
<dbReference type="Gene3D" id="1.10.1040.10">
    <property type="entry name" value="N-(1-d-carboxylethyl)-l-norvaline Dehydrogenase, domain 2"/>
    <property type="match status" value="1"/>
</dbReference>
<dbReference type="Gene3D" id="3.40.50.720">
    <property type="entry name" value="NAD(P)-binding Rossmann-like Domain"/>
    <property type="match status" value="2"/>
</dbReference>
<dbReference type="InterPro" id="IPR008927">
    <property type="entry name" value="6-PGluconate_DH-like_C_sf"/>
</dbReference>
<dbReference type="InterPro" id="IPR013328">
    <property type="entry name" value="6PGD_dom2"/>
</dbReference>
<dbReference type="InterPro" id="IPR036291">
    <property type="entry name" value="NAD(P)-bd_dom_sf"/>
</dbReference>
<dbReference type="InterPro" id="IPR017476">
    <property type="entry name" value="UDP-Glc/GDP-Man"/>
</dbReference>
<dbReference type="InterPro" id="IPR014027">
    <property type="entry name" value="UDP-Glc/GDP-Man_DH_C"/>
</dbReference>
<dbReference type="InterPro" id="IPR036220">
    <property type="entry name" value="UDP-Glc/GDP-Man_DH_C_sf"/>
</dbReference>
<dbReference type="InterPro" id="IPR014026">
    <property type="entry name" value="UDP-Glc/GDP-Man_DH_dimer"/>
</dbReference>
<dbReference type="InterPro" id="IPR001732">
    <property type="entry name" value="UDP-Glc/GDP-Man_DH_N"/>
</dbReference>
<dbReference type="InterPro" id="IPR028357">
    <property type="entry name" value="UDPglc_DH_bac"/>
</dbReference>
<dbReference type="NCBIfam" id="TIGR03026">
    <property type="entry name" value="NDP-sugDHase"/>
    <property type="match status" value="1"/>
</dbReference>
<dbReference type="NCBIfam" id="NF011631">
    <property type="entry name" value="PRK15057.1"/>
    <property type="match status" value="1"/>
</dbReference>
<dbReference type="PANTHER" id="PTHR43750:SF2">
    <property type="entry name" value="UDP-GLUCOSE 6-DEHYDROGENASE"/>
    <property type="match status" value="1"/>
</dbReference>
<dbReference type="PANTHER" id="PTHR43750">
    <property type="entry name" value="UDP-GLUCOSE 6-DEHYDROGENASE TUAD"/>
    <property type="match status" value="1"/>
</dbReference>
<dbReference type="Pfam" id="PF00984">
    <property type="entry name" value="UDPG_MGDP_dh"/>
    <property type="match status" value="1"/>
</dbReference>
<dbReference type="Pfam" id="PF03720">
    <property type="entry name" value="UDPG_MGDP_dh_C"/>
    <property type="match status" value="1"/>
</dbReference>
<dbReference type="Pfam" id="PF03721">
    <property type="entry name" value="UDPG_MGDP_dh_N"/>
    <property type="match status" value="1"/>
</dbReference>
<dbReference type="PIRSF" id="PIRSF500134">
    <property type="entry name" value="UDPglc_DH_bac"/>
    <property type="match status" value="1"/>
</dbReference>
<dbReference type="PIRSF" id="PIRSF000124">
    <property type="entry name" value="UDPglc_GDPman_dh"/>
    <property type="match status" value="1"/>
</dbReference>
<dbReference type="SMART" id="SM00984">
    <property type="entry name" value="UDPG_MGDP_dh_C"/>
    <property type="match status" value="1"/>
</dbReference>
<dbReference type="SUPFAM" id="SSF48179">
    <property type="entry name" value="6-phosphogluconate dehydrogenase C-terminal domain-like"/>
    <property type="match status" value="1"/>
</dbReference>
<dbReference type="SUPFAM" id="SSF51735">
    <property type="entry name" value="NAD(P)-binding Rossmann-fold domains"/>
    <property type="match status" value="1"/>
</dbReference>
<dbReference type="SUPFAM" id="SSF52413">
    <property type="entry name" value="UDP-glucose/GDP-mannose dehydrogenase C-terminal domain"/>
    <property type="match status" value="1"/>
</dbReference>
<organism>
    <name type="scientific">Escherichia coli O111:H-</name>
    <dbReference type="NCBI Taxonomy" id="168927"/>
    <lineage>
        <taxon>Bacteria</taxon>
        <taxon>Pseudomonadati</taxon>
        <taxon>Pseudomonadota</taxon>
        <taxon>Gammaproteobacteria</taxon>
        <taxon>Enterobacterales</taxon>
        <taxon>Enterobacteriaceae</taxon>
        <taxon>Escherichia</taxon>
    </lineage>
</organism>
<sequence length="388" mass="43289">MKITISGTGYVGLSNGILIAQHHEVVALDIVPTKVEMLNQKKSPIVDKEIEEYLATKQLNFRATTDKYDAYRDGTYVIIATPTDYDPKTNYFNTSSVESVIRDVVDINPNAVMVIKSTIPVGFTNLLKERLGIDNIFFSPEFLREGRALYDNLHPSRIVIGERSERAGRFAALLQEGAVKKDIPTLFTDSTEAEAIKLFANTYLALRVAYFNELDSYAESLGLNSRQIIEGVCLDPRIGNHYNNPSFGYGGYCLPKDTKQLLANYASVPNNIIGAIVDANRTRKDFIADSILARKPKVVGVYRLIMKSGSDNFRASSIQGIMKRIKAKGVPVIIYEPVMVEDEFFHSRVVRDLTAFKNEADIIISNRMTSELADVADKVYTRGLFGSD</sequence>
<proteinExistence type="inferred from homology"/>
<protein>
    <recommendedName>
        <fullName>UDP-glucose 6-dehydrogenase</fullName>
        <shortName>UDP-Glc dehydrogenase</shortName>
        <shortName>UDP-GlcDH</shortName>
        <shortName>UDPGDH</shortName>
        <ecNumber>1.1.1.22</ecNumber>
    </recommendedName>
</protein>
<feature type="chain" id="PRO_0000074044" description="UDP-glucose 6-dehydrogenase">
    <location>
        <begin position="1"/>
        <end position="388"/>
    </location>
</feature>
<feature type="active site" description="Nucleophile" evidence="2">
    <location>
        <position position="253"/>
    </location>
</feature>
<feature type="binding site" evidence="3">
    <location>
        <begin position="2"/>
        <end position="19"/>
    </location>
    <ligand>
        <name>NAD(+)</name>
        <dbReference type="ChEBI" id="CHEBI:57540"/>
    </ligand>
</feature>
<feature type="binding site" evidence="2">
    <location>
        <position position="11"/>
    </location>
    <ligand>
        <name>NAD(+)</name>
        <dbReference type="ChEBI" id="CHEBI:57540"/>
    </ligand>
</feature>
<feature type="binding site" evidence="2">
    <location>
        <position position="29"/>
    </location>
    <ligand>
        <name>NAD(+)</name>
        <dbReference type="ChEBI" id="CHEBI:57540"/>
    </ligand>
</feature>
<feature type="binding site" evidence="2">
    <location>
        <position position="34"/>
    </location>
    <ligand>
        <name>NAD(+)</name>
        <dbReference type="ChEBI" id="CHEBI:57540"/>
    </ligand>
</feature>
<feature type="binding site" evidence="2">
    <location>
        <position position="83"/>
    </location>
    <ligand>
        <name>NAD(+)</name>
        <dbReference type="ChEBI" id="CHEBI:57540"/>
    </ligand>
</feature>
<feature type="binding site" evidence="2">
    <location>
        <position position="118"/>
    </location>
    <ligand>
        <name>NAD(+)</name>
        <dbReference type="ChEBI" id="CHEBI:57540"/>
    </ligand>
</feature>
<feature type="binding site" evidence="2">
    <location>
        <begin position="141"/>
        <end position="145"/>
    </location>
    <ligand>
        <name>substrate</name>
    </ligand>
</feature>
<feature type="binding site" evidence="2">
    <location>
        <position position="145"/>
    </location>
    <ligand>
        <name>NAD(+)</name>
        <dbReference type="ChEBI" id="CHEBI:57540"/>
    </ligand>
</feature>
<feature type="binding site" evidence="2">
    <location>
        <position position="197"/>
    </location>
    <ligand>
        <name>substrate</name>
    </ligand>
</feature>
<feature type="binding site" evidence="2">
    <location>
        <position position="201"/>
    </location>
    <ligand>
        <name>substrate</name>
    </ligand>
</feature>
<feature type="binding site" evidence="2">
    <location>
        <begin position="242"/>
        <end position="246"/>
    </location>
    <ligand>
        <name>substrate</name>
    </ligand>
</feature>
<feature type="binding site" evidence="2">
    <location>
        <position position="250"/>
    </location>
    <ligand>
        <name>substrate</name>
    </ligand>
</feature>
<feature type="binding site" evidence="2">
    <location>
        <position position="252"/>
    </location>
    <ligand>
        <name>NAD(+)</name>
        <dbReference type="ChEBI" id="CHEBI:57540"/>
    </ligand>
</feature>
<feature type="binding site" evidence="2">
    <location>
        <position position="256"/>
    </location>
    <ligand>
        <name>NAD(+)</name>
        <dbReference type="ChEBI" id="CHEBI:57540"/>
    </ligand>
</feature>
<feature type="binding site" evidence="2">
    <location>
        <position position="307"/>
    </location>
    <ligand>
        <name>substrate</name>
    </ligand>
</feature>
<feature type="binding site" evidence="2">
    <location>
        <position position="314"/>
    </location>
    <ligand>
        <name>NAD(+)</name>
        <dbReference type="ChEBI" id="CHEBI:57540"/>
    </ligand>
</feature>
<accession>Q04872</accession>
<gene>
    <name type="primary">ugd</name>
</gene>
<keyword id="KW-0520">NAD</keyword>
<keyword id="KW-0560">Oxidoreductase</keyword>
<keyword id="KW-0597">Phosphoprotein</keyword>
<name>UDG_ECO11</name>